<accession>Q5HZ60</accession>
<accession>Q67Y41</accession>
<accession>Q682G2</accession>
<accession>Q9SUY4</accession>
<protein>
    <recommendedName>
        <fullName>mRNA cap guanine-N(7) methyltransferase 2</fullName>
        <ecNumber>2.1.1.56</ecNumber>
    </recommendedName>
    <alternativeName>
        <fullName>mRNA (guanine-N(7))-methyltransferase 2</fullName>
    </alternativeName>
    <alternativeName>
        <fullName>mRNA cap methyltransferase 2</fullName>
    </alternativeName>
</protein>
<feature type="chain" id="PRO_0000260152" description="mRNA cap guanine-N(7) methyltransferase 2">
    <location>
        <begin position="1"/>
        <end position="354"/>
    </location>
</feature>
<feature type="domain" description="mRNA cap 0 methyltransferase" evidence="2">
    <location>
        <begin position="8"/>
        <end position="286"/>
    </location>
</feature>
<feature type="binding site" evidence="2">
    <location>
        <position position="21"/>
    </location>
    <ligand>
        <name>S-adenosyl-L-methionine</name>
        <dbReference type="ChEBI" id="CHEBI:59789"/>
    </ligand>
</feature>
<feature type="binding site" evidence="2">
    <location>
        <position position="61"/>
    </location>
    <ligand>
        <name>S-adenosyl-L-methionine</name>
        <dbReference type="ChEBI" id="CHEBI:59789"/>
    </ligand>
</feature>
<feature type="binding site" evidence="2">
    <location>
        <begin position="88"/>
        <end position="89"/>
    </location>
    <ligand>
        <name>S-adenosyl-L-methionine</name>
        <dbReference type="ChEBI" id="CHEBI:59789"/>
    </ligand>
</feature>
<feature type="site" description="mRNA cap binding" evidence="2">
    <location>
        <position position="48"/>
    </location>
</feature>
<feature type="site" description="mRNA cap binding" evidence="2">
    <location>
        <position position="278"/>
    </location>
</feature>
<feature type="splice variant" id="VSP_021576" description="In isoform 2." evidence="3">
    <original>I</original>
    <variation>IV</variation>
    <location>
        <position position="60"/>
    </location>
</feature>
<feature type="splice variant" id="VSP_021577" description="In isoform 3." evidence="3">
    <original>RAQFA</original>
    <variation>SLQAC</variation>
    <location>
        <begin position="246"/>
        <end position="250"/>
    </location>
</feature>
<feature type="splice variant" id="VSP_021578" description="In isoform 3." evidence="3">
    <location>
        <begin position="251"/>
        <end position="354"/>
    </location>
</feature>
<feature type="sequence conflict" description="In Ref. 3; BAD43168." evidence="4" ref="3">
    <original>E</original>
    <variation>G</variation>
    <location>
        <position position="83"/>
    </location>
</feature>
<sequence length="354" mass="39889">MSGFVVSKPEQSHHRLFDFAKTAIINIFAHPYATVCELYCGGAPETDKWEAAPIGHYIGIDTSSGISSVREAWESQRKNYDVEFFEADPSKDDFEIQLQKKLEQADLVSCWRHLQLCFETEESARRLLTNVACLLKPGGYFFGITPDSSTIWAKYQKNVEAYHNRSGAKPNVFPNYIRSESYMITFELEEEKFPLFGKRYQLKFSGDNASEDHCLVHFPSLIRLAREAGLEFVEIQSLTDFYDDNRAQFASLLMNAGPNFVDPRGKLLPRAFDLLGLYATFIFQKPDPDIEPPLTTPIPFESSNNHDERELPVITVITDASAPAEDPSQGLGKIVEQKGILGPGPADLRFSEAI</sequence>
<evidence type="ECO:0000250" key="1"/>
<evidence type="ECO:0000255" key="2">
    <source>
        <dbReference type="PROSITE-ProRule" id="PRU00895"/>
    </source>
</evidence>
<evidence type="ECO:0000303" key="3">
    <source ref="3"/>
</evidence>
<evidence type="ECO:0000305" key="4"/>
<name>MCES2_ARATH</name>
<keyword id="KW-0025">Alternative splicing</keyword>
<keyword id="KW-0489">Methyltransferase</keyword>
<keyword id="KW-0506">mRNA capping</keyword>
<keyword id="KW-0507">mRNA processing</keyword>
<keyword id="KW-0539">Nucleus</keyword>
<keyword id="KW-1185">Reference proteome</keyword>
<keyword id="KW-0694">RNA-binding</keyword>
<keyword id="KW-0949">S-adenosyl-L-methionine</keyword>
<keyword id="KW-0808">Transferase</keyword>
<organism>
    <name type="scientific">Arabidopsis thaliana</name>
    <name type="common">Mouse-ear cress</name>
    <dbReference type="NCBI Taxonomy" id="3702"/>
    <lineage>
        <taxon>Eukaryota</taxon>
        <taxon>Viridiplantae</taxon>
        <taxon>Streptophyta</taxon>
        <taxon>Embryophyta</taxon>
        <taxon>Tracheophyta</taxon>
        <taxon>Spermatophyta</taxon>
        <taxon>Magnoliopsida</taxon>
        <taxon>eudicotyledons</taxon>
        <taxon>Gunneridae</taxon>
        <taxon>Pentapetalae</taxon>
        <taxon>rosids</taxon>
        <taxon>malvids</taxon>
        <taxon>Brassicales</taxon>
        <taxon>Brassicaceae</taxon>
        <taxon>Camelineae</taxon>
        <taxon>Arabidopsis</taxon>
    </lineage>
</organism>
<gene>
    <name type="ordered locus">At3g52210</name>
    <name type="ORF">F4F15.320</name>
    <name type="ORF">T25B15.21</name>
</gene>
<dbReference type="EC" id="2.1.1.56"/>
<dbReference type="EMBL" id="AL049711">
    <property type="protein sequence ID" value="CAB41341.1"/>
    <property type="status" value="ALT_SEQ"/>
    <property type="molecule type" value="Genomic_DNA"/>
</dbReference>
<dbReference type="EMBL" id="AL132972">
    <property type="status" value="NOT_ANNOTATED_CDS"/>
    <property type="molecule type" value="Genomic_DNA"/>
</dbReference>
<dbReference type="EMBL" id="CP002686">
    <property type="protein sequence ID" value="AEE78914.1"/>
    <property type="molecule type" value="Genomic_DNA"/>
</dbReference>
<dbReference type="EMBL" id="CP002686">
    <property type="protein sequence ID" value="AEE78915.1"/>
    <property type="molecule type" value="Genomic_DNA"/>
</dbReference>
<dbReference type="EMBL" id="CP002686">
    <property type="protein sequence ID" value="AEE78916.1"/>
    <property type="molecule type" value="Genomic_DNA"/>
</dbReference>
<dbReference type="EMBL" id="AK175405">
    <property type="protein sequence ID" value="BAD43168.1"/>
    <property type="molecule type" value="mRNA"/>
</dbReference>
<dbReference type="EMBL" id="AK176609">
    <property type="protein sequence ID" value="BAD44372.1"/>
    <property type="molecule type" value="mRNA"/>
</dbReference>
<dbReference type="EMBL" id="AK176627">
    <property type="protein sequence ID" value="BAD44390.1"/>
    <property type="molecule type" value="mRNA"/>
</dbReference>
<dbReference type="EMBL" id="BT020464">
    <property type="protein sequence ID" value="AAW38965.1"/>
    <property type="molecule type" value="mRNA"/>
</dbReference>
<dbReference type="EMBL" id="BT020571">
    <property type="protein sequence ID" value="AAW78590.1"/>
    <property type="molecule type" value="mRNA"/>
</dbReference>
<dbReference type="PIR" id="T49100">
    <property type="entry name" value="T49100"/>
</dbReference>
<dbReference type="RefSeq" id="NP_001030843.1">
    <molecule id="Q5HZ60-3"/>
    <property type="nucleotide sequence ID" value="NM_001035766.2"/>
</dbReference>
<dbReference type="RefSeq" id="NP_001030844.1">
    <molecule id="Q5HZ60-2"/>
    <property type="nucleotide sequence ID" value="NM_001035767.2"/>
</dbReference>
<dbReference type="RefSeq" id="NP_190789.3">
    <molecule id="Q5HZ60-1"/>
    <property type="nucleotide sequence ID" value="NM_115081.4"/>
</dbReference>
<dbReference type="SMR" id="Q5HZ60"/>
<dbReference type="FunCoup" id="Q5HZ60">
    <property type="interactions" value="536"/>
</dbReference>
<dbReference type="STRING" id="3702.Q5HZ60"/>
<dbReference type="iPTMnet" id="Q5HZ60"/>
<dbReference type="PaxDb" id="3702-AT3G52210.3"/>
<dbReference type="ProteomicsDB" id="238849">
    <molecule id="Q5HZ60-1"/>
</dbReference>
<dbReference type="DNASU" id="824386"/>
<dbReference type="EnsemblPlants" id="AT3G52210.1">
    <molecule id="Q5HZ60-1"/>
    <property type="protein sequence ID" value="AT3G52210.1"/>
    <property type="gene ID" value="AT3G52210"/>
</dbReference>
<dbReference type="EnsemblPlants" id="AT3G52210.2">
    <molecule id="Q5HZ60-3"/>
    <property type="protein sequence ID" value="AT3G52210.2"/>
    <property type="gene ID" value="AT3G52210"/>
</dbReference>
<dbReference type="EnsemblPlants" id="AT3G52210.3">
    <molecule id="Q5HZ60-2"/>
    <property type="protein sequence ID" value="AT3G52210.3"/>
    <property type="gene ID" value="AT3G52210"/>
</dbReference>
<dbReference type="GeneID" id="824386"/>
<dbReference type="Gramene" id="AT3G52210.1">
    <molecule id="Q5HZ60-1"/>
    <property type="protein sequence ID" value="AT3G52210.1"/>
    <property type="gene ID" value="AT3G52210"/>
</dbReference>
<dbReference type="Gramene" id="AT3G52210.2">
    <molecule id="Q5HZ60-3"/>
    <property type="protein sequence ID" value="AT3G52210.2"/>
    <property type="gene ID" value="AT3G52210"/>
</dbReference>
<dbReference type="Gramene" id="AT3G52210.3">
    <molecule id="Q5HZ60-2"/>
    <property type="protein sequence ID" value="AT3G52210.3"/>
    <property type="gene ID" value="AT3G52210"/>
</dbReference>
<dbReference type="KEGG" id="ath:AT3G52210"/>
<dbReference type="Araport" id="AT3G52210"/>
<dbReference type="TAIR" id="AT3G52210"/>
<dbReference type="eggNOG" id="ENOG502QR4R">
    <property type="taxonomic scope" value="Eukaryota"/>
</dbReference>
<dbReference type="HOGENOM" id="CLU_045607_0_0_1"/>
<dbReference type="InParanoid" id="Q5HZ60"/>
<dbReference type="OMA" id="LDEMEWQ"/>
<dbReference type="OrthoDB" id="10248867at2759"/>
<dbReference type="PhylomeDB" id="Q5HZ60"/>
<dbReference type="PRO" id="PR:Q5HZ60"/>
<dbReference type="Proteomes" id="UP000006548">
    <property type="component" value="Chromosome 3"/>
</dbReference>
<dbReference type="ExpressionAtlas" id="Q5HZ60">
    <property type="expression patterns" value="baseline and differential"/>
</dbReference>
<dbReference type="GO" id="GO:0005634">
    <property type="term" value="C:nucleus"/>
    <property type="evidence" value="ECO:0007669"/>
    <property type="project" value="UniProtKB-SubCell"/>
</dbReference>
<dbReference type="GO" id="GO:0004482">
    <property type="term" value="F:mRNA 5'-cap (guanine-N7-)-methyltransferase activity"/>
    <property type="evidence" value="ECO:0007669"/>
    <property type="project" value="UniProtKB-EC"/>
</dbReference>
<dbReference type="GO" id="GO:0003723">
    <property type="term" value="F:RNA binding"/>
    <property type="evidence" value="ECO:0007669"/>
    <property type="project" value="UniProtKB-KW"/>
</dbReference>
<dbReference type="CDD" id="cd02440">
    <property type="entry name" value="AdoMet_MTases"/>
    <property type="match status" value="1"/>
</dbReference>
<dbReference type="FunFam" id="3.40.50.150:FF:000191">
    <property type="entry name" value="mRNA cap guanine-N7 methyltransferase 2"/>
    <property type="match status" value="1"/>
</dbReference>
<dbReference type="Gene3D" id="3.40.50.150">
    <property type="entry name" value="Vaccinia Virus protein VP39"/>
    <property type="match status" value="1"/>
</dbReference>
<dbReference type="InterPro" id="IPR004971">
    <property type="entry name" value="mRNA_G-N7_MeTrfase_dom"/>
</dbReference>
<dbReference type="InterPro" id="IPR039753">
    <property type="entry name" value="RG7MT1"/>
</dbReference>
<dbReference type="InterPro" id="IPR029063">
    <property type="entry name" value="SAM-dependent_MTases_sf"/>
</dbReference>
<dbReference type="PANTHER" id="PTHR12189:SF3">
    <property type="entry name" value="MRNA (GUANINE-N(7))-METHYLTRANSFERASE"/>
    <property type="match status" value="1"/>
</dbReference>
<dbReference type="PANTHER" id="PTHR12189">
    <property type="entry name" value="MRNA GUANINE-7- METHYLTRANSFERASE"/>
    <property type="match status" value="1"/>
</dbReference>
<dbReference type="Pfam" id="PF03291">
    <property type="entry name" value="mRNA_G-N7_MeTrfase"/>
    <property type="match status" value="1"/>
</dbReference>
<dbReference type="SUPFAM" id="SSF53335">
    <property type="entry name" value="S-adenosyl-L-methionine-dependent methyltransferases"/>
    <property type="match status" value="1"/>
</dbReference>
<dbReference type="PROSITE" id="PS51562">
    <property type="entry name" value="RNA_CAP0_MT"/>
    <property type="match status" value="1"/>
</dbReference>
<reference key="1">
    <citation type="journal article" date="2000" name="Nature">
        <title>Sequence and analysis of chromosome 3 of the plant Arabidopsis thaliana.</title>
        <authorList>
            <person name="Salanoubat M."/>
            <person name="Lemcke K."/>
            <person name="Rieger M."/>
            <person name="Ansorge W."/>
            <person name="Unseld M."/>
            <person name="Fartmann B."/>
            <person name="Valle G."/>
            <person name="Bloecker H."/>
            <person name="Perez-Alonso M."/>
            <person name="Obermaier B."/>
            <person name="Delseny M."/>
            <person name="Boutry M."/>
            <person name="Grivell L.A."/>
            <person name="Mache R."/>
            <person name="Puigdomenech P."/>
            <person name="De Simone V."/>
            <person name="Choisne N."/>
            <person name="Artiguenave F."/>
            <person name="Robert C."/>
            <person name="Brottier P."/>
            <person name="Wincker P."/>
            <person name="Cattolico L."/>
            <person name="Weissenbach J."/>
            <person name="Saurin W."/>
            <person name="Quetier F."/>
            <person name="Schaefer M."/>
            <person name="Mueller-Auer S."/>
            <person name="Gabel C."/>
            <person name="Fuchs M."/>
            <person name="Benes V."/>
            <person name="Wurmbach E."/>
            <person name="Drzonek H."/>
            <person name="Erfle H."/>
            <person name="Jordan N."/>
            <person name="Bangert S."/>
            <person name="Wiedelmann R."/>
            <person name="Kranz H."/>
            <person name="Voss H."/>
            <person name="Holland R."/>
            <person name="Brandt P."/>
            <person name="Nyakatura G."/>
            <person name="Vezzi A."/>
            <person name="D'Angelo M."/>
            <person name="Pallavicini A."/>
            <person name="Toppo S."/>
            <person name="Simionati B."/>
            <person name="Conrad A."/>
            <person name="Hornischer K."/>
            <person name="Kauer G."/>
            <person name="Loehnert T.-H."/>
            <person name="Nordsiek G."/>
            <person name="Reichelt J."/>
            <person name="Scharfe M."/>
            <person name="Schoen O."/>
            <person name="Bargues M."/>
            <person name="Terol J."/>
            <person name="Climent J."/>
            <person name="Navarro P."/>
            <person name="Collado C."/>
            <person name="Perez-Perez A."/>
            <person name="Ottenwaelder B."/>
            <person name="Duchemin D."/>
            <person name="Cooke R."/>
            <person name="Laudie M."/>
            <person name="Berger-Llauro C."/>
            <person name="Purnelle B."/>
            <person name="Masuy D."/>
            <person name="de Haan M."/>
            <person name="Maarse A.C."/>
            <person name="Alcaraz J.-P."/>
            <person name="Cottet A."/>
            <person name="Casacuberta E."/>
            <person name="Monfort A."/>
            <person name="Argiriou A."/>
            <person name="Flores M."/>
            <person name="Liguori R."/>
            <person name="Vitale D."/>
            <person name="Mannhaupt G."/>
            <person name="Haase D."/>
            <person name="Schoof H."/>
            <person name="Rudd S."/>
            <person name="Zaccaria P."/>
            <person name="Mewes H.-W."/>
            <person name="Mayer K.F.X."/>
            <person name="Kaul S."/>
            <person name="Town C.D."/>
            <person name="Koo H.L."/>
            <person name="Tallon L.J."/>
            <person name="Jenkins J."/>
            <person name="Rooney T."/>
            <person name="Rizzo M."/>
            <person name="Walts A."/>
            <person name="Utterback T."/>
            <person name="Fujii C.Y."/>
            <person name="Shea T.P."/>
            <person name="Creasy T.H."/>
            <person name="Haas B."/>
            <person name="Maiti R."/>
            <person name="Wu D."/>
            <person name="Peterson J."/>
            <person name="Van Aken S."/>
            <person name="Pai G."/>
            <person name="Militscher J."/>
            <person name="Sellers P."/>
            <person name="Gill J.E."/>
            <person name="Feldblyum T.V."/>
            <person name="Preuss D."/>
            <person name="Lin X."/>
            <person name="Nierman W.C."/>
            <person name="Salzberg S.L."/>
            <person name="White O."/>
            <person name="Venter J.C."/>
            <person name="Fraser C.M."/>
            <person name="Kaneko T."/>
            <person name="Nakamura Y."/>
            <person name="Sato S."/>
            <person name="Kato T."/>
            <person name="Asamizu E."/>
            <person name="Sasamoto S."/>
            <person name="Kimura T."/>
            <person name="Idesawa K."/>
            <person name="Kawashima K."/>
            <person name="Kishida Y."/>
            <person name="Kiyokawa C."/>
            <person name="Kohara M."/>
            <person name="Matsumoto M."/>
            <person name="Matsuno A."/>
            <person name="Muraki A."/>
            <person name="Nakayama S."/>
            <person name="Nakazaki N."/>
            <person name="Shinpo S."/>
            <person name="Takeuchi C."/>
            <person name="Wada T."/>
            <person name="Watanabe A."/>
            <person name="Yamada M."/>
            <person name="Yasuda M."/>
            <person name="Tabata S."/>
        </authorList>
    </citation>
    <scope>NUCLEOTIDE SEQUENCE [LARGE SCALE GENOMIC DNA]</scope>
    <source>
        <strain>cv. Columbia</strain>
    </source>
</reference>
<reference key="2">
    <citation type="journal article" date="2017" name="Plant J.">
        <title>Araport11: a complete reannotation of the Arabidopsis thaliana reference genome.</title>
        <authorList>
            <person name="Cheng C.Y."/>
            <person name="Krishnakumar V."/>
            <person name="Chan A.P."/>
            <person name="Thibaud-Nissen F."/>
            <person name="Schobel S."/>
            <person name="Town C.D."/>
        </authorList>
    </citation>
    <scope>GENOME REANNOTATION</scope>
    <source>
        <strain>cv. Columbia</strain>
    </source>
</reference>
<reference key="3">
    <citation type="submission" date="2004-09" db="EMBL/GenBank/DDBJ databases">
        <title>Large-scale analysis of RIKEN Arabidopsis full-length (RAFL) cDNAs.</title>
        <authorList>
            <person name="Totoki Y."/>
            <person name="Seki M."/>
            <person name="Ishida J."/>
            <person name="Nakajima M."/>
            <person name="Enju A."/>
            <person name="Kamiya A."/>
            <person name="Narusaka M."/>
            <person name="Shin-i T."/>
            <person name="Nakagawa M."/>
            <person name="Sakamoto N."/>
            <person name="Oishi K."/>
            <person name="Kohara Y."/>
            <person name="Kobayashi M."/>
            <person name="Toyoda A."/>
            <person name="Sakaki Y."/>
            <person name="Sakurai T."/>
            <person name="Iida K."/>
            <person name="Akiyama K."/>
            <person name="Satou M."/>
            <person name="Toyoda T."/>
            <person name="Konagaya A."/>
            <person name="Carninci P."/>
            <person name="Kawai J."/>
            <person name="Hayashizaki Y."/>
            <person name="Shinozaki K."/>
        </authorList>
    </citation>
    <scope>NUCLEOTIDE SEQUENCE [LARGE SCALE MRNA] (ISOFORMS 2 AND 3)</scope>
    <source>
        <strain>cv. Columbia</strain>
    </source>
</reference>
<reference key="4">
    <citation type="submission" date="2005-02" db="EMBL/GenBank/DDBJ databases">
        <title>Arabidopsis ORF clones.</title>
        <authorList>
            <person name="Kim C.J."/>
            <person name="Chen H."/>
            <person name="Cheuk R.F."/>
            <person name="Shinn P."/>
            <person name="Ecker J.R."/>
        </authorList>
    </citation>
    <scope>NUCLEOTIDE SEQUENCE [LARGE SCALE MRNA] (ISOFORM 1)</scope>
    <source>
        <strain>cv. Columbia</strain>
    </source>
</reference>
<comment type="function">
    <text evidence="1">mRNA capping methyltransferase that methylates the N7 position of the added guanosine to the 5'-cap structure of mRNAs. Binds RNA containing 5'-terminal GpppC (By similarity).</text>
</comment>
<comment type="catalytic activity">
    <reaction evidence="2">
        <text>a 5'-end (5'-triphosphoguanosine)-ribonucleoside in mRNA + S-adenosyl-L-methionine = a 5'-end (N(7)-methyl 5'-triphosphoguanosine)-ribonucleoside in mRNA + S-adenosyl-L-homocysteine</text>
        <dbReference type="Rhea" id="RHEA:67008"/>
        <dbReference type="Rhea" id="RHEA-COMP:17166"/>
        <dbReference type="Rhea" id="RHEA-COMP:17167"/>
        <dbReference type="ChEBI" id="CHEBI:57856"/>
        <dbReference type="ChEBI" id="CHEBI:59789"/>
        <dbReference type="ChEBI" id="CHEBI:156461"/>
        <dbReference type="ChEBI" id="CHEBI:167617"/>
        <dbReference type="EC" id="2.1.1.56"/>
    </reaction>
</comment>
<comment type="subcellular location">
    <subcellularLocation>
        <location evidence="1">Nucleus</location>
    </subcellularLocation>
</comment>
<comment type="alternative products">
    <event type="alternative splicing"/>
    <isoform>
        <id>Q5HZ60-1</id>
        <name>1</name>
        <sequence type="displayed"/>
    </isoform>
    <isoform>
        <id>Q5HZ60-2</id>
        <name>2</name>
        <sequence type="described" ref="VSP_021576"/>
    </isoform>
    <isoform>
        <id>Q5HZ60-3</id>
        <name>3</name>
        <sequence type="described" ref="VSP_021577 VSP_021578"/>
    </isoform>
</comment>
<comment type="miscellaneous">
    <molecule>Isoform 2</molecule>
    <text evidence="4">May be due to a competing acceptor splice site.</text>
</comment>
<comment type="miscellaneous">
    <molecule>Isoform 3</molecule>
    <text evidence="4">May be due to a competing acceptor splice site.</text>
</comment>
<comment type="similarity">
    <text evidence="2">Belongs to the class I-like SAM-binding methyltransferase superfamily. mRNA cap 0 methyltransferase family.</text>
</comment>
<comment type="sequence caution" evidence="4">
    <conflict type="erroneous gene model prediction">
        <sequence resource="EMBL-CDS" id="CAB41341"/>
    </conflict>
</comment>
<proteinExistence type="evidence at transcript level"/>